<protein>
    <recommendedName>
        <fullName evidence="1">DNA replication and repair protein RecF</fullName>
    </recommendedName>
</protein>
<name>RECF_SODGL</name>
<feature type="chain" id="PRO_0000196455" description="DNA replication and repair protein RecF">
    <location>
        <begin position="1"/>
        <end position="364"/>
    </location>
</feature>
<feature type="binding site" evidence="1">
    <location>
        <begin position="30"/>
        <end position="37"/>
    </location>
    <ligand>
        <name>ATP</name>
        <dbReference type="ChEBI" id="CHEBI:30616"/>
    </ligand>
</feature>
<gene>
    <name evidence="1" type="primary">recF</name>
</gene>
<keyword id="KW-0067">ATP-binding</keyword>
<keyword id="KW-0963">Cytoplasm</keyword>
<keyword id="KW-0227">DNA damage</keyword>
<keyword id="KW-0234">DNA repair</keyword>
<keyword id="KW-0235">DNA replication</keyword>
<keyword id="KW-0238">DNA-binding</keyword>
<keyword id="KW-0547">Nucleotide-binding</keyword>
<keyword id="KW-0742">SOS response</keyword>
<reference key="1">
    <citation type="submission" date="2002-09" db="EMBL/GenBank/DDBJ databases">
        <title>Reductive evolution in a lineage of insect symbionts.</title>
        <authorList>
            <person name="Dale C."/>
            <person name="Wang B."/>
            <person name="Moran N.A."/>
            <person name="Ochman H."/>
        </authorList>
    </citation>
    <scope>NUCLEOTIDE SEQUENCE [GENOMIC DNA]</scope>
</reference>
<proteinExistence type="inferred from homology"/>
<evidence type="ECO:0000255" key="1">
    <source>
        <dbReference type="HAMAP-Rule" id="MF_00365"/>
    </source>
</evidence>
<organism>
    <name type="scientific">Sodalis glossinidius</name>
    <dbReference type="NCBI Taxonomy" id="63612"/>
    <lineage>
        <taxon>Bacteria</taxon>
        <taxon>Pseudomonadati</taxon>
        <taxon>Pseudomonadota</taxon>
        <taxon>Gammaproteobacteria</taxon>
        <taxon>Enterobacterales</taxon>
        <taxon>Bruguierivoracaceae</taxon>
        <taxon>Sodalis</taxon>
    </lineage>
</organism>
<sequence>MALSRLMIRDFRNISVADLSLAADFNFLVGANGSGKTSVLEAIYTLGHGRAFRSLQSGRVIRHEQPEFVLHGRIEAGNVDARATSVGLSRNRLGDSTVRIDGSDGHKVAELAQLLPMQLITPEGFTLLNGGPKYRRAFMDWGCFHNEPGFFTAWSNLRRLLKQRNAALRQVSRYQQLRVWDQELIPLANRISEWRADYSAAIAADITATCAQFLPEFRLDFSFQRGWDKESDFGELLERQFERDRALTYTASGPHKADFRIRAEGVPVEDILSRGQLKLLMCALRLAQGEFLTHRNGRRCLYLIDDFASELDTGRRRLLAERLKATHAQVFVSAVSADQIRDIPDEKGKMFKVEQGKISLQSEV</sequence>
<dbReference type="EMBL" id="AY148457">
    <property type="protein sequence ID" value="AAN73890.1"/>
    <property type="molecule type" value="Genomic_DNA"/>
</dbReference>
<dbReference type="SMR" id="Q6YI30"/>
<dbReference type="GO" id="GO:0005737">
    <property type="term" value="C:cytoplasm"/>
    <property type="evidence" value="ECO:0007669"/>
    <property type="project" value="UniProtKB-SubCell"/>
</dbReference>
<dbReference type="GO" id="GO:0005524">
    <property type="term" value="F:ATP binding"/>
    <property type="evidence" value="ECO:0007669"/>
    <property type="project" value="UniProtKB-UniRule"/>
</dbReference>
<dbReference type="GO" id="GO:0003697">
    <property type="term" value="F:single-stranded DNA binding"/>
    <property type="evidence" value="ECO:0007669"/>
    <property type="project" value="UniProtKB-UniRule"/>
</dbReference>
<dbReference type="GO" id="GO:0006260">
    <property type="term" value="P:DNA replication"/>
    <property type="evidence" value="ECO:0007669"/>
    <property type="project" value="UniProtKB-UniRule"/>
</dbReference>
<dbReference type="GO" id="GO:0000731">
    <property type="term" value="P:DNA synthesis involved in DNA repair"/>
    <property type="evidence" value="ECO:0007669"/>
    <property type="project" value="TreeGrafter"/>
</dbReference>
<dbReference type="GO" id="GO:0006302">
    <property type="term" value="P:double-strand break repair"/>
    <property type="evidence" value="ECO:0007669"/>
    <property type="project" value="TreeGrafter"/>
</dbReference>
<dbReference type="GO" id="GO:0009432">
    <property type="term" value="P:SOS response"/>
    <property type="evidence" value="ECO:0007669"/>
    <property type="project" value="UniProtKB-UniRule"/>
</dbReference>
<dbReference type="FunFam" id="1.20.1050.90:FF:000001">
    <property type="entry name" value="DNA replication and repair protein RecF"/>
    <property type="match status" value="1"/>
</dbReference>
<dbReference type="Gene3D" id="3.40.50.300">
    <property type="entry name" value="P-loop containing nucleotide triphosphate hydrolases"/>
    <property type="match status" value="1"/>
</dbReference>
<dbReference type="Gene3D" id="1.20.1050.90">
    <property type="entry name" value="RecF/RecN/SMC, N-terminal domain"/>
    <property type="match status" value="1"/>
</dbReference>
<dbReference type="HAMAP" id="MF_00365">
    <property type="entry name" value="RecF"/>
    <property type="match status" value="1"/>
</dbReference>
<dbReference type="InterPro" id="IPR001238">
    <property type="entry name" value="DNA-binding_RecF"/>
</dbReference>
<dbReference type="InterPro" id="IPR018078">
    <property type="entry name" value="DNA-binding_RecF_CS"/>
</dbReference>
<dbReference type="InterPro" id="IPR027417">
    <property type="entry name" value="P-loop_NTPase"/>
</dbReference>
<dbReference type="InterPro" id="IPR003395">
    <property type="entry name" value="RecF/RecN/SMC_N"/>
</dbReference>
<dbReference type="InterPro" id="IPR042174">
    <property type="entry name" value="RecF_2"/>
</dbReference>
<dbReference type="NCBIfam" id="TIGR00611">
    <property type="entry name" value="recf"/>
    <property type="match status" value="1"/>
</dbReference>
<dbReference type="PANTHER" id="PTHR32182">
    <property type="entry name" value="DNA REPLICATION AND REPAIR PROTEIN RECF"/>
    <property type="match status" value="1"/>
</dbReference>
<dbReference type="PANTHER" id="PTHR32182:SF0">
    <property type="entry name" value="DNA REPLICATION AND REPAIR PROTEIN RECF"/>
    <property type="match status" value="1"/>
</dbReference>
<dbReference type="Pfam" id="PF02463">
    <property type="entry name" value="SMC_N"/>
    <property type="match status" value="1"/>
</dbReference>
<dbReference type="SUPFAM" id="SSF52540">
    <property type="entry name" value="P-loop containing nucleoside triphosphate hydrolases"/>
    <property type="match status" value="1"/>
</dbReference>
<dbReference type="PROSITE" id="PS00617">
    <property type="entry name" value="RECF_1"/>
    <property type="match status" value="1"/>
</dbReference>
<dbReference type="PROSITE" id="PS00618">
    <property type="entry name" value="RECF_2"/>
    <property type="match status" value="1"/>
</dbReference>
<accession>Q6YI30</accession>
<comment type="function">
    <text evidence="1">The RecF protein is involved in DNA metabolism; it is required for DNA replication and normal SOS inducibility. RecF binds preferentially to single-stranded, linear DNA. It also seems to bind ATP.</text>
</comment>
<comment type="subcellular location">
    <subcellularLocation>
        <location evidence="1">Cytoplasm</location>
    </subcellularLocation>
</comment>
<comment type="similarity">
    <text evidence="1">Belongs to the RecF family.</text>
</comment>